<gene>
    <name type="primary">HSK3</name>
    <name type="ordered locus">AFR204W</name>
</gene>
<proteinExistence type="inferred from homology"/>
<keyword id="KW-0131">Cell cycle</keyword>
<keyword id="KW-0132">Cell division</keyword>
<keyword id="KW-0137">Centromere</keyword>
<keyword id="KW-0158">Chromosome</keyword>
<keyword id="KW-0159">Chromosome partition</keyword>
<keyword id="KW-0175">Coiled coil</keyword>
<keyword id="KW-0963">Cytoplasm</keyword>
<keyword id="KW-0206">Cytoskeleton</keyword>
<keyword id="KW-0995">Kinetochore</keyword>
<keyword id="KW-0493">Microtubule</keyword>
<keyword id="KW-0498">Mitosis</keyword>
<keyword id="KW-0539">Nucleus</keyword>
<keyword id="KW-1185">Reference proteome</keyword>
<protein>
    <recommendedName>
        <fullName>DASH complex subunit HSK3</fullName>
    </recommendedName>
    <alternativeName>
        <fullName>Outer kinetochore protein HSK3</fullName>
    </alternativeName>
</protein>
<comment type="function">
    <text evidence="2">Component of the DASH complex that connects microtubules with kinetochores and couples microtubule depolymerisation to chromosome movement; it is involved in retrieving kinetochores to the spindle poles before their re-orientation on the spindle in early mitosis and allows microtubule depolymerization to pull chromosomes apart and resist detachment during anaphase. Kinetochores, consisting of a centromere-associated inner segment and a microtubule-contacting outer segment, play a crucial role in chromosome segregation by mediating the physical connection between centromeric DNA and microtubules. Kinetochores also serve as an input point for the spindle assembly checkpoint, which delays anaphase until all chromosomes have bioriented on the mitotic spindle.</text>
</comment>
<comment type="subunit">
    <text evidence="1 2">Component of the DASH complex consisting of ASK1, DAD1, DAD2, DAD3, DAD4, DAM1, DUO1, HSK3, SPC19 and SPC34, with a stoichiometry of one copy of each subunit per complex. Multiple DASH complexes oligomerize to form a ring that encircles spindle microtubules and organizes the rod-like NDC80 complexes of the outer kinetochore. DASH complex oligomerization strengthens microtubule attachments (By similarity). On cytoplasmic microtubules, DASH complexes appear to form patches instead of rings (By similarity).</text>
</comment>
<comment type="subcellular location">
    <subcellularLocation>
        <location evidence="2">Nucleus</location>
    </subcellularLocation>
    <subcellularLocation>
        <location evidence="2">Cytoplasm</location>
        <location evidence="2">Cytoskeleton</location>
        <location evidence="2">Spindle</location>
    </subcellularLocation>
    <subcellularLocation>
        <location evidence="2">Chromosome</location>
        <location evidence="2">Centromere</location>
        <location evidence="2">Kinetochore</location>
    </subcellularLocation>
</comment>
<comment type="similarity">
    <text evidence="4">Belongs to the DASH complex HSK3 family.</text>
</comment>
<name>HSK3_EREGS</name>
<accession>Q753W8</accession>
<sequence length="68" mass="7971">MDQTKRRHYSQLSQQLQLLQKNLEATTQHVETMSVQCNEHLVNKLGKIQASWFIGGNRCFEQELLGKR</sequence>
<feature type="chain" id="PRO_0000084078" description="DASH complex subunit HSK3">
    <location>
        <begin position="1"/>
        <end position="68"/>
    </location>
</feature>
<feature type="coiled-coil region" evidence="3">
    <location>
        <begin position="3"/>
        <end position="39"/>
    </location>
</feature>
<organism>
    <name type="scientific">Eremothecium gossypii (strain ATCC 10895 / CBS 109.51 / FGSC 9923 / NRRL Y-1056)</name>
    <name type="common">Yeast</name>
    <name type="synonym">Ashbya gossypii</name>
    <dbReference type="NCBI Taxonomy" id="284811"/>
    <lineage>
        <taxon>Eukaryota</taxon>
        <taxon>Fungi</taxon>
        <taxon>Dikarya</taxon>
        <taxon>Ascomycota</taxon>
        <taxon>Saccharomycotina</taxon>
        <taxon>Saccharomycetes</taxon>
        <taxon>Saccharomycetales</taxon>
        <taxon>Saccharomycetaceae</taxon>
        <taxon>Eremothecium</taxon>
    </lineage>
</organism>
<evidence type="ECO:0000250" key="1">
    <source>
        <dbReference type="UniProtKB" id="O94483"/>
    </source>
</evidence>
<evidence type="ECO:0000250" key="2">
    <source>
        <dbReference type="UniProtKB" id="P69852"/>
    </source>
</evidence>
<evidence type="ECO:0000255" key="3"/>
<evidence type="ECO:0000305" key="4"/>
<dbReference type="EMBL" id="AE016819">
    <property type="protein sequence ID" value="AAS53575.1"/>
    <property type="molecule type" value="Genomic_DNA"/>
</dbReference>
<dbReference type="RefSeq" id="NP_985751.1">
    <property type="nucleotide sequence ID" value="NM_211105.1"/>
</dbReference>
<dbReference type="SMR" id="Q753W8"/>
<dbReference type="FunCoup" id="Q753W8">
    <property type="interactions" value="44"/>
</dbReference>
<dbReference type="STRING" id="284811.Q753W8"/>
<dbReference type="EnsemblFungi" id="AAS53575">
    <property type="protein sequence ID" value="AAS53575"/>
    <property type="gene ID" value="AGOS_AFR204W"/>
</dbReference>
<dbReference type="GeneID" id="4622012"/>
<dbReference type="KEGG" id="ago:AGOS_AFR204W"/>
<dbReference type="eggNOG" id="KOG4853">
    <property type="taxonomic scope" value="Eukaryota"/>
</dbReference>
<dbReference type="HOGENOM" id="CLU_193155_0_0_1"/>
<dbReference type="InParanoid" id="Q753W8"/>
<dbReference type="OMA" id="QCNKNIV"/>
<dbReference type="OrthoDB" id="4040439at2759"/>
<dbReference type="Proteomes" id="UP000000591">
    <property type="component" value="Chromosome VI"/>
</dbReference>
<dbReference type="GO" id="GO:0005737">
    <property type="term" value="C:cytoplasm"/>
    <property type="evidence" value="ECO:0007669"/>
    <property type="project" value="UniProtKB-KW"/>
</dbReference>
<dbReference type="GO" id="GO:0042729">
    <property type="term" value="C:DASH complex"/>
    <property type="evidence" value="ECO:0000250"/>
    <property type="project" value="UniProtKB"/>
</dbReference>
<dbReference type="GO" id="GO:0005874">
    <property type="term" value="C:microtubule"/>
    <property type="evidence" value="ECO:0007669"/>
    <property type="project" value="UniProtKB-KW"/>
</dbReference>
<dbReference type="GO" id="GO:0005819">
    <property type="term" value="C:spindle"/>
    <property type="evidence" value="ECO:0007669"/>
    <property type="project" value="UniProtKB-SubCell"/>
</dbReference>
<dbReference type="GO" id="GO:0051010">
    <property type="term" value="F:microtubule plus-end binding"/>
    <property type="evidence" value="ECO:0007669"/>
    <property type="project" value="EnsemblFungi"/>
</dbReference>
<dbReference type="GO" id="GO:0008608">
    <property type="term" value="P:attachment of spindle microtubules to kinetochore"/>
    <property type="evidence" value="ECO:0000250"/>
    <property type="project" value="UniProtKB"/>
</dbReference>
<dbReference type="GO" id="GO:0051301">
    <property type="term" value="P:cell division"/>
    <property type="evidence" value="ECO:0007669"/>
    <property type="project" value="UniProtKB-KW"/>
</dbReference>
<dbReference type="GO" id="GO:1990758">
    <property type="term" value="P:mitotic sister chromatid biorientation"/>
    <property type="evidence" value="ECO:0000250"/>
    <property type="project" value="UniProtKB"/>
</dbReference>
<dbReference type="GO" id="GO:0051987">
    <property type="term" value="P:positive regulation of attachment of spindle microtubules to kinetochore"/>
    <property type="evidence" value="ECO:0007669"/>
    <property type="project" value="EnsemblFungi"/>
</dbReference>
<dbReference type="GO" id="GO:0031116">
    <property type="term" value="P:positive regulation of microtubule polymerization"/>
    <property type="evidence" value="ECO:0007669"/>
    <property type="project" value="EnsemblFungi"/>
</dbReference>
<dbReference type="GO" id="GO:1990976">
    <property type="term" value="P:protein transport along microtubule to mitotic spindle pole body"/>
    <property type="evidence" value="ECO:0000250"/>
    <property type="project" value="UniProtKB"/>
</dbReference>
<dbReference type="InterPro" id="IPR042332">
    <property type="entry name" value="Hsk3"/>
</dbReference>
<dbReference type="InterPro" id="IPR013183">
    <property type="entry name" value="Hsk3-like"/>
</dbReference>
<dbReference type="PANTHER" id="PTHR28289">
    <property type="entry name" value="DASH COMPLEX SUBUNIT HSK3"/>
    <property type="match status" value="1"/>
</dbReference>
<dbReference type="PANTHER" id="PTHR28289:SF1">
    <property type="entry name" value="DASH COMPLEX SUBUNIT HSK3"/>
    <property type="match status" value="1"/>
</dbReference>
<dbReference type="Pfam" id="PF08227">
    <property type="entry name" value="DASH_Hsk3"/>
    <property type="match status" value="1"/>
</dbReference>
<reference key="1">
    <citation type="journal article" date="2004" name="Science">
        <title>The Ashbya gossypii genome as a tool for mapping the ancient Saccharomyces cerevisiae genome.</title>
        <authorList>
            <person name="Dietrich F.S."/>
            <person name="Voegeli S."/>
            <person name="Brachat S."/>
            <person name="Lerch A."/>
            <person name="Gates K."/>
            <person name="Steiner S."/>
            <person name="Mohr C."/>
            <person name="Poehlmann R."/>
            <person name="Luedi P."/>
            <person name="Choi S."/>
            <person name="Wing R.A."/>
            <person name="Flavier A."/>
            <person name="Gaffney T.D."/>
            <person name="Philippsen P."/>
        </authorList>
    </citation>
    <scope>NUCLEOTIDE SEQUENCE [LARGE SCALE GENOMIC DNA]</scope>
    <source>
        <strain>ATCC 10895 / CBS 109.51 / FGSC 9923 / NRRL Y-1056</strain>
    </source>
</reference>
<reference key="2">
    <citation type="journal article" date="2013" name="G3 (Bethesda)">
        <title>Genomes of Ashbya fungi isolated from insects reveal four mating-type loci, numerous translocations, lack of transposons, and distinct gene duplications.</title>
        <authorList>
            <person name="Dietrich F.S."/>
            <person name="Voegeli S."/>
            <person name="Kuo S."/>
            <person name="Philippsen P."/>
        </authorList>
    </citation>
    <scope>GENOME REANNOTATION</scope>
    <source>
        <strain>ATCC 10895 / CBS 109.51 / FGSC 9923 / NRRL Y-1056</strain>
    </source>
</reference>